<proteinExistence type="evidence at protein level"/>
<comment type="function">
    <text evidence="8">Component of a multiprotein complex required for the assembly of the RNA endonuclease module of the integrator complex (PubMed:39032489). Associates with INTS9 and INTS11 in the cytoplasm, stabilizing the INTS9-INTS11 heterodimer and blocking the active site of INTS11 (PubMed:39032489). BRAT1 then joins the complex and plugs the active site of INTS11, leading to WDR73 release and nuclear import of INTS9 and INTS11 (PubMed:39032489).</text>
</comment>
<comment type="subunit">
    <text evidence="7 8">Interacts with INTS9 and INTS11; the interaction is direct (PubMed:33686175, PubMed:39032489). Part of the multiprotein complex composed of BRAT1, WDR73, as well as integrator complex subunits INTS9 and INTS11 (PubMed:39032489).</text>
</comment>
<comment type="subcellular location">
    <subcellularLocation>
        <location evidence="1 8">Cytoplasm</location>
    </subcellularLocation>
    <subcellularLocation>
        <location evidence="1">Cytoplasm</location>
        <location evidence="1">Cytoskeleton</location>
        <location evidence="1">Spindle</location>
    </subcellularLocation>
    <subcellularLocation>
        <location evidence="1">Cytoplasm</location>
        <location evidence="1">Cytoskeleton</location>
        <location evidence="1">Spindle pole</location>
    </subcellularLocation>
    <subcellularLocation>
        <location evidence="1">Cleavage furrow</location>
    </subcellularLocation>
    <text evidence="1">During interphase, located in the cytoplasm (PubMed:25466283). During mitosis, accumulates at the spindle poles and microtubule asters and later in the cleavage furrow (PubMed:25466283).</text>
</comment>
<comment type="tissue specificity">
    <text evidence="1">Expressed in kidney and brain. In the kidney, expressed in glomeruli, most probably in podocytes, and in tubules (at protein level). In the brain, expressed in the cerebellum, with high levels in Purkinje cells and their projecting axons, in the deep cerebellar nuclei and in pyramidal neurons of the cerebral cortex (at protein level). In the white matter, mainly present in astrocytes, but not in oligodendrocytes (at protein level). Also highly expressed in endothelial cells of cerebral capillaries (at protein level).</text>
</comment>
<comment type="developmental stage">
    <text evidence="1">In fetal kidney (25 weeks of gestation), expressed in immature podocytes from the S-shaped-body stage to the capillary loop stage. Expression decreases along glomerular maturation (at protein level). In mature glomeruli, expressed at the periphery of the glomerular tuft, most probably in the cell body of mature podocytes. Also detected in mature tubules (at protein level).</text>
</comment>
<comment type="disease" evidence="1 2 3 4 5 6 8">
    <disease id="DI-04306">
        <name>Galloway-Mowat syndrome 1</name>
        <acronym>GAMOS1</acronym>
        <description>A form of Galloway-Mowat syndrome, a severe renal-neurological disease characterized by early-onset nephrotic syndrome associated with microcephaly, central nervous system abnormalities, developmental delays, and a propensity for seizures. Brain anomalies include gyration defects ranging from lissencephaly to pachygyria and polymicrogyria, and cerebellar hypoplasia. Most patients show facial dysmorphism characterized by a small, narrow forehead, large/floppy ears, deep-set eyes, hypertelorism and micrognathia. Additional variable features are visual impairment and arachnodactyly. Patients may die in early childhood. GAMOS1 inheritance is autosomal recessive.</description>
        <dbReference type="MIM" id="251300"/>
    </disease>
    <text>The disease is caused by variants affecting the gene represented in this entry.</text>
</comment>
<comment type="similarity">
    <text evidence="11">Belongs to the WD repeat WDR73 family.</text>
</comment>
<comment type="sequence caution" evidence="11">
    <conflict type="frameshift">
        <sequence resource="EMBL-CDS" id="AAF28942"/>
    </conflict>
</comment>
<keyword id="KW-0002">3D-structure</keyword>
<keyword id="KW-0963">Cytoplasm</keyword>
<keyword id="KW-0206">Cytoskeleton</keyword>
<keyword id="KW-0225">Disease variant</keyword>
<keyword id="KW-0887">Epilepsy</keyword>
<keyword id="KW-0991">Intellectual disability</keyword>
<keyword id="KW-1267">Proteomics identification</keyword>
<keyword id="KW-1185">Reference proteome</keyword>
<keyword id="KW-0677">Repeat</keyword>
<keyword id="KW-0853">WD repeat</keyword>
<organism>
    <name type="scientific">Homo sapiens</name>
    <name type="common">Human</name>
    <dbReference type="NCBI Taxonomy" id="9606"/>
    <lineage>
        <taxon>Eukaryota</taxon>
        <taxon>Metazoa</taxon>
        <taxon>Chordata</taxon>
        <taxon>Craniata</taxon>
        <taxon>Vertebrata</taxon>
        <taxon>Euteleostomi</taxon>
        <taxon>Mammalia</taxon>
        <taxon>Eutheria</taxon>
        <taxon>Euarchontoglires</taxon>
        <taxon>Primates</taxon>
        <taxon>Haplorrhini</taxon>
        <taxon>Catarrhini</taxon>
        <taxon>Hominidae</taxon>
        <taxon>Homo</taxon>
    </lineage>
</organism>
<evidence type="ECO:0000269" key="1">
    <source>
    </source>
</evidence>
<evidence type="ECO:0000269" key="2">
    <source>
    </source>
</evidence>
<evidence type="ECO:0000269" key="3">
    <source>
    </source>
</evidence>
<evidence type="ECO:0000269" key="4">
    <source>
    </source>
</evidence>
<evidence type="ECO:0000269" key="5">
    <source>
    </source>
</evidence>
<evidence type="ECO:0000269" key="6">
    <source>
    </source>
</evidence>
<evidence type="ECO:0000269" key="7">
    <source>
    </source>
</evidence>
<evidence type="ECO:0000269" key="8">
    <source>
    </source>
</evidence>
<evidence type="ECO:0000303" key="9">
    <source>
    </source>
</evidence>
<evidence type="ECO:0000303" key="10">
    <source>
    </source>
</evidence>
<evidence type="ECO:0000305" key="11"/>
<evidence type="ECO:0000312" key="12">
    <source>
        <dbReference type="HGNC" id="HGNC:25928"/>
    </source>
</evidence>
<evidence type="ECO:0007744" key="13">
    <source>
        <dbReference type="PDB" id="8R22"/>
    </source>
</evidence>
<name>WDR73_HUMAN</name>
<reference key="1">
    <citation type="journal article" date="2000" name="Genome Res.">
        <title>Cloning and functional analysis of cDNAs with open reading frames for 300 previously undefined genes expressed in CD34+ hematopoietic stem/progenitor cells.</title>
        <authorList>
            <person name="Zhang Q.-H."/>
            <person name="Ye M."/>
            <person name="Wu X.-Y."/>
            <person name="Ren S.-X."/>
            <person name="Zhao M."/>
            <person name="Zhao C.-J."/>
            <person name="Fu G."/>
            <person name="Shen Y."/>
            <person name="Fan H.-Y."/>
            <person name="Lu G."/>
            <person name="Zhong M."/>
            <person name="Xu X.-R."/>
            <person name="Han Z.-G."/>
            <person name="Zhang J.-W."/>
            <person name="Tao J."/>
            <person name="Huang Q.-H."/>
            <person name="Zhou J."/>
            <person name="Hu G.-X."/>
            <person name="Gu J."/>
            <person name="Chen S.-J."/>
            <person name="Chen Z."/>
        </authorList>
    </citation>
    <scope>NUCLEOTIDE SEQUENCE [LARGE SCALE MRNA]</scope>
    <source>
        <tissue>Umbilical cord blood</tissue>
    </source>
</reference>
<reference key="2">
    <citation type="journal article" date="2004" name="Nat. Genet.">
        <title>Complete sequencing and characterization of 21,243 full-length human cDNAs.</title>
        <authorList>
            <person name="Ota T."/>
            <person name="Suzuki Y."/>
            <person name="Nishikawa T."/>
            <person name="Otsuki T."/>
            <person name="Sugiyama T."/>
            <person name="Irie R."/>
            <person name="Wakamatsu A."/>
            <person name="Hayashi K."/>
            <person name="Sato H."/>
            <person name="Nagai K."/>
            <person name="Kimura K."/>
            <person name="Makita H."/>
            <person name="Sekine M."/>
            <person name="Obayashi M."/>
            <person name="Nishi T."/>
            <person name="Shibahara T."/>
            <person name="Tanaka T."/>
            <person name="Ishii S."/>
            <person name="Yamamoto J."/>
            <person name="Saito K."/>
            <person name="Kawai Y."/>
            <person name="Isono Y."/>
            <person name="Nakamura Y."/>
            <person name="Nagahari K."/>
            <person name="Murakami K."/>
            <person name="Yasuda T."/>
            <person name="Iwayanagi T."/>
            <person name="Wagatsuma M."/>
            <person name="Shiratori A."/>
            <person name="Sudo H."/>
            <person name="Hosoiri T."/>
            <person name="Kaku Y."/>
            <person name="Kodaira H."/>
            <person name="Kondo H."/>
            <person name="Sugawara M."/>
            <person name="Takahashi M."/>
            <person name="Kanda K."/>
            <person name="Yokoi T."/>
            <person name="Furuya T."/>
            <person name="Kikkawa E."/>
            <person name="Omura Y."/>
            <person name="Abe K."/>
            <person name="Kamihara K."/>
            <person name="Katsuta N."/>
            <person name="Sato K."/>
            <person name="Tanikawa M."/>
            <person name="Yamazaki M."/>
            <person name="Ninomiya K."/>
            <person name="Ishibashi T."/>
            <person name="Yamashita H."/>
            <person name="Murakawa K."/>
            <person name="Fujimori K."/>
            <person name="Tanai H."/>
            <person name="Kimata M."/>
            <person name="Watanabe M."/>
            <person name="Hiraoka S."/>
            <person name="Chiba Y."/>
            <person name="Ishida S."/>
            <person name="Ono Y."/>
            <person name="Takiguchi S."/>
            <person name="Watanabe S."/>
            <person name="Yosida M."/>
            <person name="Hotuta T."/>
            <person name="Kusano J."/>
            <person name="Kanehori K."/>
            <person name="Takahashi-Fujii A."/>
            <person name="Hara H."/>
            <person name="Tanase T.-O."/>
            <person name="Nomura Y."/>
            <person name="Togiya S."/>
            <person name="Komai F."/>
            <person name="Hara R."/>
            <person name="Takeuchi K."/>
            <person name="Arita M."/>
            <person name="Imose N."/>
            <person name="Musashino K."/>
            <person name="Yuuki H."/>
            <person name="Oshima A."/>
            <person name="Sasaki N."/>
            <person name="Aotsuka S."/>
            <person name="Yoshikawa Y."/>
            <person name="Matsunawa H."/>
            <person name="Ichihara T."/>
            <person name="Shiohata N."/>
            <person name="Sano S."/>
            <person name="Moriya S."/>
            <person name="Momiyama H."/>
            <person name="Satoh N."/>
            <person name="Takami S."/>
            <person name="Terashima Y."/>
            <person name="Suzuki O."/>
            <person name="Nakagawa S."/>
            <person name="Senoh A."/>
            <person name="Mizoguchi H."/>
            <person name="Goto Y."/>
            <person name="Shimizu F."/>
            <person name="Wakebe H."/>
            <person name="Hishigaki H."/>
            <person name="Watanabe T."/>
            <person name="Sugiyama A."/>
            <person name="Takemoto M."/>
            <person name="Kawakami B."/>
            <person name="Yamazaki M."/>
            <person name="Watanabe K."/>
            <person name="Kumagai A."/>
            <person name="Itakura S."/>
            <person name="Fukuzumi Y."/>
            <person name="Fujimori Y."/>
            <person name="Komiyama M."/>
            <person name="Tashiro H."/>
            <person name="Tanigami A."/>
            <person name="Fujiwara T."/>
            <person name="Ono T."/>
            <person name="Yamada K."/>
            <person name="Fujii Y."/>
            <person name="Ozaki K."/>
            <person name="Hirao M."/>
            <person name="Ohmori Y."/>
            <person name="Kawabata A."/>
            <person name="Hikiji T."/>
            <person name="Kobatake N."/>
            <person name="Inagaki H."/>
            <person name="Ikema Y."/>
            <person name="Okamoto S."/>
            <person name="Okitani R."/>
            <person name="Kawakami T."/>
            <person name="Noguchi S."/>
            <person name="Itoh T."/>
            <person name="Shigeta K."/>
            <person name="Senba T."/>
            <person name="Matsumura K."/>
            <person name="Nakajima Y."/>
            <person name="Mizuno T."/>
            <person name="Morinaga M."/>
            <person name="Sasaki M."/>
            <person name="Togashi T."/>
            <person name="Oyama M."/>
            <person name="Hata H."/>
            <person name="Watanabe M."/>
            <person name="Komatsu T."/>
            <person name="Mizushima-Sugano J."/>
            <person name="Satoh T."/>
            <person name="Shirai Y."/>
            <person name="Takahashi Y."/>
            <person name="Nakagawa K."/>
            <person name="Okumura K."/>
            <person name="Nagase T."/>
            <person name="Nomura N."/>
            <person name="Kikuchi H."/>
            <person name="Masuho Y."/>
            <person name="Yamashita R."/>
            <person name="Nakai K."/>
            <person name="Yada T."/>
            <person name="Nakamura Y."/>
            <person name="Ohara O."/>
            <person name="Isogai T."/>
            <person name="Sugano S."/>
        </authorList>
    </citation>
    <scope>NUCLEOTIDE SEQUENCE [LARGE SCALE MRNA]</scope>
    <source>
        <tissue>Placenta</tissue>
    </source>
</reference>
<reference key="3">
    <citation type="journal article" date="2004" name="Genome Res.">
        <title>The status, quality, and expansion of the NIH full-length cDNA project: the Mammalian Gene Collection (MGC).</title>
        <authorList>
            <consortium name="The MGC Project Team"/>
        </authorList>
    </citation>
    <scope>NUCLEOTIDE SEQUENCE [LARGE SCALE MRNA]</scope>
    <source>
        <tissue>Brain</tissue>
    </source>
</reference>
<reference key="4">
    <citation type="journal article" date="2011" name="BMC Syst. Biol.">
        <title>Initial characterization of the human central proteome.</title>
        <authorList>
            <person name="Burkard T.R."/>
            <person name="Planyavsky M."/>
            <person name="Kaupe I."/>
            <person name="Breitwieser F.P."/>
            <person name="Buerckstuemmer T."/>
            <person name="Bennett K.L."/>
            <person name="Superti-Furga G."/>
            <person name="Colinge J."/>
        </authorList>
    </citation>
    <scope>IDENTIFICATION BY MASS SPECTROMETRY [LARGE SCALE ANALYSIS]</scope>
</reference>
<reference key="5">
    <citation type="journal article" date="2021" name="Sci. Rep.">
        <title>Disruption of pathways regulated by Integrator complex in Galloway-Mowat syndrome due to WDR73 mutations.</title>
        <authorList>
            <person name="Tilley F.C."/>
            <person name="Arrondel C."/>
            <person name="Chhuon C."/>
            <person name="Boisson M."/>
            <person name="Cagnard N."/>
            <person name="Parisot M."/>
            <person name="Menara G."/>
            <person name="Lefort N."/>
            <person name="Guerrera I.C."/>
            <person name="Bole-Feysot C."/>
            <person name="Benmerah A."/>
            <person name="Antignac C."/>
            <person name="Mollet G."/>
        </authorList>
    </citation>
    <scope>INTERACTION WITH INTS9 AND INTS11</scope>
</reference>
<reference evidence="13" key="6">
    <citation type="journal article" date="2024" name="Mol. Cell">
        <title>Assembly mechanism of Integrator's RNA cleavage module.</title>
        <authorList>
            <person name="Sabath K."/>
            <person name="Qiu C."/>
            <person name="Jonas S."/>
        </authorList>
    </citation>
    <scope>STRUCTURE BY ELECTRON MICROSCOPY (3.20 ANGSTROMS) IN COMPLEX WITH BRAT1; INTS9 AND INTS11</scope>
    <scope>FUNCTION</scope>
    <scope>SUBCELLULAR LOCATION</scope>
    <scope>INTERACTION WITH BRAT1; INTS9 AND INTS11</scope>
    <scope>MUTAGENESIS OF LEU-8</scope>
    <scope>CHARACTERIZATION OF VARIANTS GAMOS1 GLN-23; LYS-96 AND GLY-371</scope>
</reference>
<reference key="7">
    <citation type="journal article" date="2014" name="Am. J. Hum. Genet.">
        <title>Loss-of-function mutations in WDR73 are responsible for microcephaly and steroid-resistant nephrotic syndrome: Galloway-Mowat syndrome.</title>
        <authorList>
            <person name="Colin E."/>
            <person name="Huynh Cong E."/>
            <person name="Mollet G."/>
            <person name="Guichet A."/>
            <person name="Gribouval O."/>
            <person name="Arrondel C."/>
            <person name="Boyer O."/>
            <person name="Daniel L."/>
            <person name="Gubler M.C."/>
            <person name="Ekinci Z."/>
            <person name="Tsimaratos M."/>
            <person name="Chabrol B."/>
            <person name="Boddaert N."/>
            <person name="Verloes A."/>
            <person name="Chevrollier A."/>
            <person name="Gueguen N."/>
            <person name="Desquiret-Dumas V."/>
            <person name="Ferre M."/>
            <person name="Procaccio V."/>
            <person name="Richard L."/>
            <person name="Funalot B."/>
            <person name="Moncla A."/>
            <person name="Bonneau D."/>
            <person name="Antignac C."/>
        </authorList>
    </citation>
    <scope>INVOLVEMENT IN GAMOS1</scope>
    <scope>SUBCELLULAR LOCATION</scope>
    <scope>TISSUE SPECIFICITY</scope>
    <scope>DEVELOPMENTAL STAGE</scope>
    <scope>VARIANT GAMOS1 43-TYR--ARG-378 DEL</scope>
</reference>
<reference key="8">
    <citation type="journal article" date="2015" name="Brain">
        <title>Recessive nephrocerebellar syndrome on the Galloway-Mowat syndrome spectrum is caused by homozygous protein-truncating mutations of WDR73.</title>
        <authorList>
            <person name="Jinks R.N."/>
            <person name="Puffenberger E.G."/>
            <person name="Baple E."/>
            <person name="Harding B."/>
            <person name="Crino P."/>
            <person name="Fogo A.B."/>
            <person name="Wenger O."/>
            <person name="Xin B."/>
            <person name="Koehler A.E."/>
            <person name="McGlincy M.H."/>
            <person name="Provencher M.M."/>
            <person name="Smith J.D."/>
            <person name="Tran L."/>
            <person name="Al Turki S."/>
            <person name="Chioza B.A."/>
            <person name="Cross H."/>
            <person name="Harlalka G.V."/>
            <person name="Hurles M.E."/>
            <person name="Maroofian R."/>
            <person name="Heaps A.D."/>
            <person name="Morton M.C."/>
            <person name="Stempak L."/>
            <person name="Hildebrandt F."/>
            <person name="Sadowski C.E."/>
            <person name="Zaritsky J."/>
            <person name="Campellone K."/>
            <person name="Morton D.H."/>
            <person name="Wang H."/>
            <person name="Crosby A."/>
            <person name="Strauss K.A."/>
        </authorList>
    </citation>
    <scope>INVOLVEMENT IN GAMOS1</scope>
</reference>
<reference key="9">
    <citation type="journal article" date="2015" name="Hum. Mutat.">
        <title>WDR73 Mutations Cause Infantile Neurodegeneration and Variable Glomerular Kidney Disease.</title>
        <authorList>
            <person name="Vodopiutz J."/>
            <person name="Seidl R."/>
            <person name="Prayer D."/>
            <person name="Khan M.I."/>
            <person name="Mayr J.A."/>
            <person name="Streubel B."/>
            <person name="Steiss J.O."/>
            <person name="Hahn A."/>
            <person name="Csaicsich D."/>
            <person name="Castro C."/>
            <person name="Assoum M."/>
            <person name="Mueller T."/>
            <person name="Wieczorek D."/>
            <person name="Mancini G.M."/>
            <person name="Sadowski C.E."/>
            <person name="Levy N."/>
            <person name="Megarbane A."/>
            <person name="Godbole K."/>
            <person name="Schanze D."/>
            <person name="Hildebrandt F."/>
            <person name="Delague V."/>
            <person name="Janecke A.R."/>
            <person name="Zenker M."/>
        </authorList>
    </citation>
    <scope>VARIANTS GAMOS1 GLN-23; LYS-96; 314-GLN--ARG-378 DEL AND TYR-347</scope>
</reference>
<reference key="10">
    <citation type="journal article" date="2015" name="J. Med. Genet.">
        <title>Nonsense mutation in the WDR73 gene is associated with Galloway-Mowat syndrome.</title>
        <authorList>
            <person name="Ben-Omran T."/>
            <person name="Fahiminiya S."/>
            <person name="Sorfazlian N."/>
            <person name="Almuriekhi M."/>
            <person name="Nawaz Z."/>
            <person name="Nadaf J."/>
            <person name="Khadija K.A."/>
            <person name="Zaineddin S."/>
            <person name="Kamel H."/>
            <person name="Majewski J."/>
            <person name="Tropepe V."/>
        </authorList>
    </citation>
    <scope>VARIANT GAMOS1 235-GLN--ARG-378 DEL</scope>
    <scope>CHARACTERIZATION OF VARIANT GAMOS1 235-GLN--ARG-378 DEL</scope>
</reference>
<reference key="11">
    <citation type="journal article" date="2016" name="Am. J. Med. Genet. A">
        <title>Extending the mutation spectrum for Galloway-Mowat syndrome to include homozygous missense mutations in the WDR73 gene.</title>
        <authorList>
            <person name="Rosti R.O."/>
            <person name="Dikoglu E."/>
            <person name="Zaki M.S."/>
            <person name="Abdel-Salam G."/>
            <person name="Makhseed N."/>
            <person name="Sese J.C."/>
            <person name="Musaev D."/>
            <person name="Rosti B."/>
            <person name="Harbert M.J."/>
            <person name="Jones M.C."/>
            <person name="Vaux K.K."/>
            <person name="Gleeson J.G."/>
        </authorList>
    </citation>
    <scope>VARIANTS GAMOS1 LYS-96 AND GLU-201</scope>
</reference>
<reference key="12">
    <citation type="journal article" date="2017" name="Clin. Chim. Acta">
        <title>WDR73 missense mutation causes infantile onset intellectual disability and cerebellar hypoplasia in a consanguineous family.</title>
        <authorList>
            <person name="Jiang C."/>
            <person name="Gai N."/>
            <person name="Zou Y."/>
            <person name="Zheng Y."/>
            <person name="Ma R."/>
            <person name="Wei X."/>
            <person name="Liang D."/>
            <person name="Wu L."/>
        </authorList>
    </citation>
    <scope>VARIANT GAMOS1 GLY-371</scope>
</reference>
<feature type="chain" id="PRO_0000307280" description="Integrator complex assembly factor WDR73">
    <location>
        <begin position="1"/>
        <end position="378"/>
    </location>
</feature>
<feature type="repeat" description="WD 1">
    <location>
        <begin position="73"/>
        <end position="113"/>
    </location>
</feature>
<feature type="repeat" description="WD 2">
    <location>
        <begin position="121"/>
        <end position="163"/>
    </location>
</feature>
<feature type="repeat" description="WD 3">
    <location>
        <begin position="167"/>
        <end position="205"/>
    </location>
</feature>
<feature type="repeat" description="WD 4">
    <location>
        <begin position="214"/>
        <end position="255"/>
    </location>
</feature>
<feature type="repeat" description="WD 5">
    <location>
        <begin position="266"/>
        <end position="305"/>
    </location>
</feature>
<feature type="repeat" description="WD 6">
    <location>
        <begin position="322"/>
        <end position="371"/>
    </location>
</feature>
<feature type="sequence variant" id="VAR_090247" description="In GAMOS1; decreased interaction with INTS9 and INTS11." evidence="4 8">
    <original>L</original>
    <variation>Q</variation>
    <location>
        <position position="23"/>
    </location>
</feature>
<feature type="sequence variant" id="VAR_090248" description="In GAMOS1." evidence="1">
    <location>
        <begin position="43"/>
        <end position="378"/>
    </location>
</feature>
<feature type="sequence variant" id="VAR_090249" description="In GAMOS1; does not affect interaction with INTS9 and INTS11." evidence="4 5 8">
    <original>R</original>
    <variation>K</variation>
    <location>
        <position position="96"/>
    </location>
</feature>
<feature type="sequence variant" id="VAR_090250" description="In GAMOS1; uncertain significance." evidence="5">
    <original>G</original>
    <variation>E</variation>
    <location>
        <position position="201"/>
    </location>
</feature>
<feature type="sequence variant" id="VAR_090251" description="In GAMOS1." evidence="2">
    <location>
        <begin position="235"/>
        <end position="378"/>
    </location>
</feature>
<feature type="sequence variant" id="VAR_035399" description="In dbSNP:rs11073619.">
    <original>R</original>
    <variation>H</variation>
    <location>
        <position position="249"/>
    </location>
</feature>
<feature type="sequence variant" id="VAR_090252" description="In GAMOS1; uncertain significance." evidence="4">
    <location>
        <begin position="314"/>
        <end position="378"/>
    </location>
</feature>
<feature type="sequence variant" id="VAR_090253" description="In GAMOS1; uncertain significance." evidence="4">
    <original>H</original>
    <variation>Y</variation>
    <location>
        <position position="347"/>
    </location>
</feature>
<feature type="sequence variant" id="VAR_090254" description="In GAMOS1; unable to rescue a wdr73 knockdown in zebrafish; decreased interaction with INTS9 and INTS11." evidence="6 8">
    <original>W</original>
    <variation>G</variation>
    <location>
        <position position="371"/>
    </location>
</feature>
<feature type="mutagenesis site" description="Abolished interaction with INTS9 and INTS11." evidence="8">
    <original>L</original>
    <variation>E</variation>
    <location>
        <position position="8"/>
    </location>
</feature>
<feature type="sequence conflict" description="In Ref. 2; BAB55373." evidence="11" ref="2">
    <original>E</original>
    <variation>K</variation>
    <location>
        <position position="224"/>
    </location>
</feature>
<protein>
    <recommendedName>
        <fullName evidence="11">Integrator complex assembly factor WDR73</fullName>
    </recommendedName>
    <alternativeName>
        <fullName evidence="11">WD repeat-containing protein 73</fullName>
    </alternativeName>
</protein>
<accession>Q6P4I2</accession>
<accession>Q96JZ1</accession>
<accession>Q9P0B7</accession>
<sequence>MDPGDDWLVESLRLYQDFYAFDLSGATRVLEWIDDKGVFVAGYESLKKNEILHLKLPLRLSVKENKGLFPERDFKVRHGGFSDRSIFDLKHVPHTRLLVTSGLPGCYLQVWQVAEDSDVIKAVSTIAVHEKEESLWPRVAVFSTLAPGVLHGARLRSLQVVDLESRKTTYTSDVSDSEELSSLQVLDADTFAFCCASGRLGLVDTRQKWAPLENRSPGPGSGGERWCAEVGSWGQGPGPSIASLGSDGRLCLLDPRDLCHPVSSVQCPVSVPSPDPELLRVTWAPGLKNCLAISGFDGTVQVYDATSWDGTRSQDGTRSQVEPLFTHRGHIFLDGNGMDPAPLVTTHTWHPCRPRTLLSATNDASLHVWDWVDLCAPR</sequence>
<gene>
    <name evidence="10 12" type="primary">WDR73</name>
    <name evidence="9" type="ORF">HSPC264</name>
</gene>
<dbReference type="EMBL" id="AF161382">
    <property type="protein sequence ID" value="AAF28942.1"/>
    <property type="status" value="ALT_FRAME"/>
    <property type="molecule type" value="mRNA"/>
</dbReference>
<dbReference type="EMBL" id="AK027794">
    <property type="protein sequence ID" value="BAB55373.1"/>
    <property type="molecule type" value="mRNA"/>
</dbReference>
<dbReference type="EMBL" id="BC063392">
    <property type="protein sequence ID" value="AAH63392.1"/>
    <property type="molecule type" value="mRNA"/>
</dbReference>
<dbReference type="CCDS" id="CCDS45339.1"/>
<dbReference type="RefSeq" id="NP_116245.2">
    <property type="nucleotide sequence ID" value="NM_032856.5"/>
</dbReference>
<dbReference type="PDB" id="8R22">
    <property type="method" value="EM"/>
    <property type="resolution" value="3.90 A"/>
    <property type="chains" value="D=1-378"/>
</dbReference>
<dbReference type="PDBsum" id="8R22"/>
<dbReference type="EMDB" id="EMD-18833"/>
<dbReference type="SMR" id="Q6P4I2"/>
<dbReference type="BioGRID" id="124376">
    <property type="interactions" value="30"/>
</dbReference>
<dbReference type="FunCoup" id="Q6P4I2">
    <property type="interactions" value="909"/>
</dbReference>
<dbReference type="IntAct" id="Q6P4I2">
    <property type="interactions" value="16"/>
</dbReference>
<dbReference type="MINT" id="Q6P4I2"/>
<dbReference type="STRING" id="9606.ENSP00000387982"/>
<dbReference type="GlyGen" id="Q6P4I2">
    <property type="glycosylation" value="1 site, 1 O-linked glycan (1 site)"/>
</dbReference>
<dbReference type="iPTMnet" id="Q6P4I2"/>
<dbReference type="PhosphoSitePlus" id="Q6P4I2"/>
<dbReference type="BioMuta" id="WDR73"/>
<dbReference type="DMDM" id="74758274"/>
<dbReference type="jPOST" id="Q6P4I2"/>
<dbReference type="MassIVE" id="Q6P4I2"/>
<dbReference type="PaxDb" id="9606-ENSP00000387982"/>
<dbReference type="PeptideAtlas" id="Q6P4I2"/>
<dbReference type="ProteomicsDB" id="66980"/>
<dbReference type="Pumba" id="Q6P4I2"/>
<dbReference type="Antibodypedia" id="50322">
    <property type="antibodies" value="88 antibodies from 18 providers"/>
</dbReference>
<dbReference type="DNASU" id="84942"/>
<dbReference type="Ensembl" id="ENST00000434634.7">
    <property type="protein sequence ID" value="ENSP00000387982.3"/>
    <property type="gene ID" value="ENSG00000177082.13"/>
</dbReference>
<dbReference type="Ensembl" id="ENST00000708214.1">
    <property type="protein sequence ID" value="ENSP00000517130.1"/>
    <property type="gene ID" value="ENSG00000291629.1"/>
</dbReference>
<dbReference type="GeneID" id="84942"/>
<dbReference type="KEGG" id="hsa:84942"/>
<dbReference type="MANE-Select" id="ENST00000434634.7">
    <property type="protein sequence ID" value="ENSP00000387982.3"/>
    <property type="RefSeq nucleotide sequence ID" value="NM_032856.5"/>
    <property type="RefSeq protein sequence ID" value="NP_116245.2"/>
</dbReference>
<dbReference type="UCSC" id="uc002bkw.3">
    <property type="organism name" value="human"/>
</dbReference>
<dbReference type="AGR" id="HGNC:25928"/>
<dbReference type="CTD" id="84942"/>
<dbReference type="DisGeNET" id="84942"/>
<dbReference type="GeneCards" id="WDR73"/>
<dbReference type="HGNC" id="HGNC:25928">
    <property type="gene designation" value="WDR73"/>
</dbReference>
<dbReference type="HPA" id="ENSG00000177082">
    <property type="expression patterns" value="Low tissue specificity"/>
</dbReference>
<dbReference type="MalaCards" id="WDR73"/>
<dbReference type="MIM" id="251300">
    <property type="type" value="phenotype"/>
</dbReference>
<dbReference type="MIM" id="616144">
    <property type="type" value="gene"/>
</dbReference>
<dbReference type="neXtProt" id="NX_Q6P4I2"/>
<dbReference type="OpenTargets" id="ENSG00000177082"/>
<dbReference type="Orphanet" id="83472">
    <property type="disease" value="CAMOS syndrome"/>
</dbReference>
<dbReference type="Orphanet" id="2065">
    <property type="disease" value="Galloway-Mowat syndrome"/>
</dbReference>
<dbReference type="PharmGKB" id="PA142670588"/>
<dbReference type="VEuPathDB" id="HostDB:ENSG00000177082"/>
<dbReference type="eggNOG" id="KOG0264">
    <property type="taxonomic scope" value="Eukaryota"/>
</dbReference>
<dbReference type="GeneTree" id="ENSGT00390000015701"/>
<dbReference type="HOGENOM" id="CLU_070481_0_0_1"/>
<dbReference type="InParanoid" id="Q6P4I2"/>
<dbReference type="OMA" id="CKPRTLL"/>
<dbReference type="OrthoDB" id="9822052at2759"/>
<dbReference type="PAN-GO" id="Q6P4I2">
    <property type="GO annotations" value="3 GO annotations based on evolutionary models"/>
</dbReference>
<dbReference type="PhylomeDB" id="Q6P4I2"/>
<dbReference type="TreeFam" id="TF331370"/>
<dbReference type="PathwayCommons" id="Q6P4I2"/>
<dbReference type="SignaLink" id="Q6P4I2"/>
<dbReference type="BioGRID-ORCS" id="84942">
    <property type="hits" value="324 hits in 1159 CRISPR screens"/>
</dbReference>
<dbReference type="ChiTaRS" id="WDR73">
    <property type="organism name" value="human"/>
</dbReference>
<dbReference type="GenomeRNAi" id="84942"/>
<dbReference type="Pharos" id="Q6P4I2">
    <property type="development level" value="Tbio"/>
</dbReference>
<dbReference type="PRO" id="PR:Q6P4I2"/>
<dbReference type="Proteomes" id="UP000005640">
    <property type="component" value="Chromosome 15"/>
</dbReference>
<dbReference type="RNAct" id="Q6P4I2">
    <property type="molecule type" value="protein"/>
</dbReference>
<dbReference type="Bgee" id="ENSG00000177082">
    <property type="expression patterns" value="Expressed in right uterine tube and 192 other cell types or tissues"/>
</dbReference>
<dbReference type="ExpressionAtlas" id="Q6P4I2">
    <property type="expression patterns" value="baseline and differential"/>
</dbReference>
<dbReference type="GO" id="GO:0032154">
    <property type="term" value="C:cleavage furrow"/>
    <property type="evidence" value="ECO:0007669"/>
    <property type="project" value="UniProtKB-SubCell"/>
</dbReference>
<dbReference type="GO" id="GO:0005737">
    <property type="term" value="C:cytoplasm"/>
    <property type="evidence" value="ECO:0000314"/>
    <property type="project" value="UniProtKB"/>
</dbReference>
<dbReference type="GO" id="GO:0000922">
    <property type="term" value="C:spindle pole"/>
    <property type="evidence" value="ECO:0007669"/>
    <property type="project" value="UniProtKB-SubCell"/>
</dbReference>
<dbReference type="GO" id="GO:0030674">
    <property type="term" value="F:protein-macromolecule adaptor activity"/>
    <property type="evidence" value="ECO:0000314"/>
    <property type="project" value="UniProtKB"/>
</dbReference>
<dbReference type="GO" id="GO:0031122">
    <property type="term" value="P:cytoplasmic microtubule organization"/>
    <property type="evidence" value="ECO:0000315"/>
    <property type="project" value="UniProtKB"/>
</dbReference>
<dbReference type="GO" id="GO:0006997">
    <property type="term" value="P:nucleus organization"/>
    <property type="evidence" value="ECO:0000315"/>
    <property type="project" value="UniProtKB"/>
</dbReference>
<dbReference type="FunFam" id="2.130.10.10:FF:000662">
    <property type="entry name" value="WD repeat domain 73"/>
    <property type="match status" value="1"/>
</dbReference>
<dbReference type="Gene3D" id="2.130.10.10">
    <property type="entry name" value="YVTN repeat-like/Quinoprotein amine dehydrogenase"/>
    <property type="match status" value="1"/>
</dbReference>
<dbReference type="InterPro" id="IPR015943">
    <property type="entry name" value="WD40/YVTN_repeat-like_dom_sf"/>
</dbReference>
<dbReference type="InterPro" id="IPR036322">
    <property type="entry name" value="WD40_repeat_dom_sf"/>
</dbReference>
<dbReference type="InterPro" id="IPR001680">
    <property type="entry name" value="WD40_rpt"/>
</dbReference>
<dbReference type="InterPro" id="IPR042795">
    <property type="entry name" value="Wdr73"/>
</dbReference>
<dbReference type="PANTHER" id="PTHR46947">
    <property type="entry name" value="WD REPEAT-CONTAINING PROTEIN 73"/>
    <property type="match status" value="1"/>
</dbReference>
<dbReference type="PANTHER" id="PTHR46947:SF1">
    <property type="entry name" value="WD REPEAT-CONTAINING PROTEIN 73"/>
    <property type="match status" value="1"/>
</dbReference>
<dbReference type="SMART" id="SM00320">
    <property type="entry name" value="WD40"/>
    <property type="match status" value="2"/>
</dbReference>
<dbReference type="SUPFAM" id="SSF50978">
    <property type="entry name" value="WD40 repeat-like"/>
    <property type="match status" value="1"/>
</dbReference>